<evidence type="ECO:0000255" key="1">
    <source>
        <dbReference type="HAMAP-Rule" id="MF_01810"/>
    </source>
</evidence>
<evidence type="ECO:0000256" key="2">
    <source>
        <dbReference type="SAM" id="MobiDB-lite"/>
    </source>
</evidence>
<accession>Q21DG0</accession>
<dbReference type="EMBL" id="CP000282">
    <property type="protein sequence ID" value="ABD83269.1"/>
    <property type="molecule type" value="Genomic_DNA"/>
</dbReference>
<dbReference type="RefSeq" id="WP_011470484.1">
    <property type="nucleotide sequence ID" value="NC_007912.1"/>
</dbReference>
<dbReference type="SMR" id="Q21DG0"/>
<dbReference type="STRING" id="203122.Sde_4014"/>
<dbReference type="GeneID" id="98615605"/>
<dbReference type="KEGG" id="sde:Sde_4014"/>
<dbReference type="eggNOG" id="COG0706">
    <property type="taxonomic scope" value="Bacteria"/>
</dbReference>
<dbReference type="HOGENOM" id="CLU_016535_3_0_6"/>
<dbReference type="OrthoDB" id="9780552at2"/>
<dbReference type="Proteomes" id="UP000001947">
    <property type="component" value="Chromosome"/>
</dbReference>
<dbReference type="GO" id="GO:0005886">
    <property type="term" value="C:plasma membrane"/>
    <property type="evidence" value="ECO:0007669"/>
    <property type="project" value="UniProtKB-SubCell"/>
</dbReference>
<dbReference type="GO" id="GO:0032977">
    <property type="term" value="F:membrane insertase activity"/>
    <property type="evidence" value="ECO:0007669"/>
    <property type="project" value="InterPro"/>
</dbReference>
<dbReference type="GO" id="GO:0051205">
    <property type="term" value="P:protein insertion into membrane"/>
    <property type="evidence" value="ECO:0007669"/>
    <property type="project" value="TreeGrafter"/>
</dbReference>
<dbReference type="GO" id="GO:0015031">
    <property type="term" value="P:protein transport"/>
    <property type="evidence" value="ECO:0007669"/>
    <property type="project" value="UniProtKB-KW"/>
</dbReference>
<dbReference type="CDD" id="cd20070">
    <property type="entry name" value="5TM_YidC_Alb3"/>
    <property type="match status" value="1"/>
</dbReference>
<dbReference type="CDD" id="cd19961">
    <property type="entry name" value="EcYidC-like_peri"/>
    <property type="match status" value="1"/>
</dbReference>
<dbReference type="Gene3D" id="2.70.98.90">
    <property type="match status" value="1"/>
</dbReference>
<dbReference type="HAMAP" id="MF_01810">
    <property type="entry name" value="YidC_type1"/>
    <property type="match status" value="1"/>
</dbReference>
<dbReference type="InterPro" id="IPR019998">
    <property type="entry name" value="Membr_insert_YidC"/>
</dbReference>
<dbReference type="InterPro" id="IPR028053">
    <property type="entry name" value="Membr_insert_YidC_N"/>
</dbReference>
<dbReference type="InterPro" id="IPR001708">
    <property type="entry name" value="YidC/ALB3/OXA1/COX18"/>
</dbReference>
<dbReference type="InterPro" id="IPR028055">
    <property type="entry name" value="YidC/Oxa/ALB_C"/>
</dbReference>
<dbReference type="InterPro" id="IPR047196">
    <property type="entry name" value="YidC_ALB_C"/>
</dbReference>
<dbReference type="InterPro" id="IPR038221">
    <property type="entry name" value="YidC_periplasmic_sf"/>
</dbReference>
<dbReference type="NCBIfam" id="NF002352">
    <property type="entry name" value="PRK01318.1-3"/>
    <property type="match status" value="1"/>
</dbReference>
<dbReference type="NCBIfam" id="NF002353">
    <property type="entry name" value="PRK01318.1-4"/>
    <property type="match status" value="1"/>
</dbReference>
<dbReference type="NCBIfam" id="TIGR03593">
    <property type="entry name" value="yidC_nterm"/>
    <property type="match status" value="1"/>
</dbReference>
<dbReference type="NCBIfam" id="TIGR03592">
    <property type="entry name" value="yidC_oxa1_cterm"/>
    <property type="match status" value="1"/>
</dbReference>
<dbReference type="PANTHER" id="PTHR12428:SF65">
    <property type="entry name" value="CYTOCHROME C OXIDASE ASSEMBLY PROTEIN COX18, MITOCHONDRIAL"/>
    <property type="match status" value="1"/>
</dbReference>
<dbReference type="PANTHER" id="PTHR12428">
    <property type="entry name" value="OXA1"/>
    <property type="match status" value="1"/>
</dbReference>
<dbReference type="Pfam" id="PF02096">
    <property type="entry name" value="60KD_IMP"/>
    <property type="match status" value="1"/>
</dbReference>
<dbReference type="Pfam" id="PF14849">
    <property type="entry name" value="YidC_periplas"/>
    <property type="match status" value="1"/>
</dbReference>
<dbReference type="PRINTS" id="PR00701">
    <property type="entry name" value="60KDINNERMP"/>
</dbReference>
<dbReference type="PRINTS" id="PR01900">
    <property type="entry name" value="YIDCPROTEIN"/>
</dbReference>
<feature type="chain" id="PRO_1000070161" description="Membrane protein insertase YidC">
    <location>
        <begin position="1"/>
        <end position="557"/>
    </location>
</feature>
<feature type="transmembrane region" description="Helical" evidence="1">
    <location>
        <begin position="1"/>
        <end position="21"/>
    </location>
</feature>
<feature type="transmembrane region" description="Helical" evidence="1">
    <location>
        <begin position="346"/>
        <end position="366"/>
    </location>
</feature>
<feature type="transmembrane region" description="Helical" evidence="1">
    <location>
        <begin position="369"/>
        <end position="389"/>
    </location>
</feature>
<feature type="transmembrane region" description="Helical" evidence="1">
    <location>
        <begin position="439"/>
        <end position="459"/>
    </location>
</feature>
<feature type="transmembrane region" description="Helical" evidence="1">
    <location>
        <begin position="470"/>
        <end position="490"/>
    </location>
</feature>
<feature type="transmembrane region" description="Helical" evidence="1">
    <location>
        <begin position="517"/>
        <end position="537"/>
    </location>
</feature>
<feature type="region of interest" description="Disordered" evidence="2">
    <location>
        <begin position="52"/>
        <end position="71"/>
    </location>
</feature>
<gene>
    <name evidence="1" type="primary">yidC</name>
    <name type="ordered locus">Sde_4014</name>
</gene>
<organism>
    <name type="scientific">Saccharophagus degradans (strain 2-40 / ATCC 43961 / DSM 17024)</name>
    <dbReference type="NCBI Taxonomy" id="203122"/>
    <lineage>
        <taxon>Bacteria</taxon>
        <taxon>Pseudomonadati</taxon>
        <taxon>Pseudomonadota</taxon>
        <taxon>Gammaproteobacteria</taxon>
        <taxon>Cellvibrionales</taxon>
        <taxon>Cellvibrionaceae</taxon>
        <taxon>Saccharophagus</taxon>
    </lineage>
</organism>
<keyword id="KW-0997">Cell inner membrane</keyword>
<keyword id="KW-1003">Cell membrane</keyword>
<keyword id="KW-0143">Chaperone</keyword>
<keyword id="KW-0472">Membrane</keyword>
<keyword id="KW-0653">Protein transport</keyword>
<keyword id="KW-1185">Reference proteome</keyword>
<keyword id="KW-0812">Transmembrane</keyword>
<keyword id="KW-1133">Transmembrane helix</keyword>
<keyword id="KW-0813">Transport</keyword>
<comment type="function">
    <text evidence="1">Required for the insertion and/or proper folding and/or complex formation of integral membrane proteins into the membrane. Involved in integration of membrane proteins that insert both dependently and independently of the Sec translocase complex, as well as at least some lipoproteins. Aids folding of multispanning membrane proteins.</text>
</comment>
<comment type="subunit">
    <text evidence="1">Interacts with the Sec translocase complex via SecD. Specifically interacts with transmembrane segments of nascent integral membrane proteins during membrane integration.</text>
</comment>
<comment type="subcellular location">
    <subcellularLocation>
        <location evidence="1">Cell inner membrane</location>
        <topology evidence="1">Multi-pass membrane protein</topology>
    </subcellularLocation>
</comment>
<comment type="similarity">
    <text evidence="1">Belongs to the OXA1/ALB3/YidC family. Type 1 subfamily.</text>
</comment>
<reference key="1">
    <citation type="journal article" date="2008" name="PLoS Genet.">
        <title>Complete genome sequence of the complex carbohydrate-degrading marine bacterium, Saccharophagus degradans strain 2-40 T.</title>
        <authorList>
            <person name="Weiner R.M."/>
            <person name="Taylor L.E. II"/>
            <person name="Henrissat B."/>
            <person name="Hauser L."/>
            <person name="Land M."/>
            <person name="Coutinho P.M."/>
            <person name="Rancurel C."/>
            <person name="Saunders E.H."/>
            <person name="Longmire A.G."/>
            <person name="Zhang H."/>
            <person name="Bayer E.A."/>
            <person name="Gilbert H.J."/>
            <person name="Larimer F."/>
            <person name="Zhulin I.B."/>
            <person name="Ekborg N.A."/>
            <person name="Lamed R."/>
            <person name="Richardson P.M."/>
            <person name="Borovok I."/>
            <person name="Hutcheson S."/>
        </authorList>
    </citation>
    <scope>NUCLEOTIDE SEQUENCE [LARGE SCALE GENOMIC DNA]</scope>
    <source>
        <strain>2-40 / ATCC 43961 / DSM 17024</strain>
    </source>
</reference>
<name>YIDC_SACD2</name>
<proteinExistence type="inferred from homology"/>
<sequence>MNWLRNSLIAAILVITYVLFIRWNEFSERQQVPTIANQPAAVTTPAYEAVPSDDAVASSATEESDVPEVSVSAEPVAAPKAVYQPKLVTVKTDVLEVQIDTNGGDVLQVVLLKHLADKADDNQPFVLMTQNSAHTYVARSGLAGGNGPDGAKKGRAKYSVAKTNYSLNSDDQVVVDLTLDQENAQITKRFTFTKSSYLIDVEYIITNRADTPWAAKLYGQIIRDGSEPSYGYMGMRPYLGAAITTPEVNYEKVSFDDMDDGPFKVEQKGGWVSLIQHYFISAWIPPKDATNSYELSKSSKGNYVLRFISETTTVAPHSVGTVKAGFYAGPKNIRRLEEISPHLDLTIDYSFLWFIAKPLFFALDFIHGLVGNWGVAIILLTVLIKAVFFYPSAMSYRSMAKMRKLQPMMAELKERYGEDKQKMSGELMKLYKKEKVNPFGGCLPILLQMPVFISLYWMIMESVELRHQPFFLWIQDLSVKDPLFILPLLMGVTMYIQQKLNPTPPDPMQAKVMQMMPIGFTFLFMFFPAGLVLYWVVNNTLSISQQYVITRNIEKAG</sequence>
<protein>
    <recommendedName>
        <fullName evidence="1">Membrane protein insertase YidC</fullName>
    </recommendedName>
    <alternativeName>
        <fullName evidence="1">Foldase YidC</fullName>
    </alternativeName>
    <alternativeName>
        <fullName evidence="1">Membrane integrase YidC</fullName>
    </alternativeName>
    <alternativeName>
        <fullName evidence="1">Membrane protein YidC</fullName>
    </alternativeName>
</protein>